<keyword id="KW-0067">ATP-binding</keyword>
<keyword id="KW-0460">Magnesium</keyword>
<keyword id="KW-0547">Nucleotide-binding</keyword>
<keyword id="KW-0808">Transferase</keyword>
<keyword id="KW-0819">tRNA processing</keyword>
<reference key="1">
    <citation type="submission" date="2008-10" db="EMBL/GenBank/DDBJ databases">
        <title>Genome sequence of Bacillus cereus B4264.</title>
        <authorList>
            <person name="Dodson R.J."/>
            <person name="Durkin A.S."/>
            <person name="Rosovitz M.J."/>
            <person name="Rasko D.A."/>
            <person name="Hoffmaster A."/>
            <person name="Ravel J."/>
            <person name="Sutton G."/>
        </authorList>
    </citation>
    <scope>NUCLEOTIDE SEQUENCE [LARGE SCALE GENOMIC DNA]</scope>
    <source>
        <strain>B4264</strain>
    </source>
</reference>
<gene>
    <name evidence="1" type="primary">miaA</name>
    <name type="ordered locus">BCB4264_A3813</name>
</gene>
<sequence>MGEVQREKVAVIIGPTAVGKTKLSIDLAKALNGEIISGDSMQIYRTMDIGTAKVTKAEMDGIPHYMIDIKNPEDSFSVAEFQERVRKHIREITERGKLPIIVGGTGLYIQSVLFDYQFTDDAGDVIYREQMEKLALERGVEYVHKKLQEVDPESAERIHANNVRRVIRALEIFHMTGEKMSDQIEKQEKELLYDVSLIGLTMDREMLYDRINLRVDLMMEQGLLEEVEGLYNRGIRDCQSIQAIGYKEIYDYFENRASLEDAVSQLKTNSRRYAKRQLTWFRNKMDVTWFDVTDGEKTSEILRYIEGKLQVKSNNSK</sequence>
<comment type="function">
    <text evidence="1">Catalyzes the transfer of a dimethylallyl group onto the adenine at position 37 in tRNAs that read codons beginning with uridine, leading to the formation of N6-(dimethylallyl)adenosine (i(6)A).</text>
</comment>
<comment type="catalytic activity">
    <reaction evidence="1">
        <text>adenosine(37) in tRNA + dimethylallyl diphosphate = N(6)-dimethylallyladenosine(37) in tRNA + diphosphate</text>
        <dbReference type="Rhea" id="RHEA:26482"/>
        <dbReference type="Rhea" id="RHEA-COMP:10162"/>
        <dbReference type="Rhea" id="RHEA-COMP:10375"/>
        <dbReference type="ChEBI" id="CHEBI:33019"/>
        <dbReference type="ChEBI" id="CHEBI:57623"/>
        <dbReference type="ChEBI" id="CHEBI:74411"/>
        <dbReference type="ChEBI" id="CHEBI:74415"/>
        <dbReference type="EC" id="2.5.1.75"/>
    </reaction>
</comment>
<comment type="cofactor">
    <cofactor evidence="1">
        <name>Mg(2+)</name>
        <dbReference type="ChEBI" id="CHEBI:18420"/>
    </cofactor>
</comment>
<comment type="subunit">
    <text evidence="1">Monomer.</text>
</comment>
<comment type="similarity">
    <text evidence="1">Belongs to the IPP transferase family.</text>
</comment>
<accession>B7HCI3</accession>
<protein>
    <recommendedName>
        <fullName evidence="1">tRNA dimethylallyltransferase</fullName>
        <ecNumber evidence="1">2.5.1.75</ecNumber>
    </recommendedName>
    <alternativeName>
        <fullName evidence="1">Dimethylallyl diphosphate:tRNA dimethylallyltransferase</fullName>
        <shortName evidence="1">DMAPP:tRNA dimethylallyltransferase</shortName>
        <shortName evidence="1">DMATase</shortName>
    </alternativeName>
    <alternativeName>
        <fullName evidence="1">Isopentenyl-diphosphate:tRNA isopentenyltransferase</fullName>
        <shortName evidence="1">IPP transferase</shortName>
        <shortName evidence="1">IPPT</shortName>
        <shortName evidence="1">IPTase</shortName>
    </alternativeName>
</protein>
<evidence type="ECO:0000255" key="1">
    <source>
        <dbReference type="HAMAP-Rule" id="MF_00185"/>
    </source>
</evidence>
<dbReference type="EC" id="2.5.1.75" evidence="1"/>
<dbReference type="EMBL" id="CP001176">
    <property type="protein sequence ID" value="ACK60437.1"/>
    <property type="molecule type" value="Genomic_DNA"/>
</dbReference>
<dbReference type="RefSeq" id="WP_000504927.1">
    <property type="nucleotide sequence ID" value="NC_011725.1"/>
</dbReference>
<dbReference type="SMR" id="B7HCI3"/>
<dbReference type="KEGG" id="bcb:BCB4264_A3813"/>
<dbReference type="HOGENOM" id="CLU_032616_0_1_9"/>
<dbReference type="Proteomes" id="UP000007096">
    <property type="component" value="Chromosome"/>
</dbReference>
<dbReference type="GO" id="GO:0005524">
    <property type="term" value="F:ATP binding"/>
    <property type="evidence" value="ECO:0007669"/>
    <property type="project" value="UniProtKB-UniRule"/>
</dbReference>
<dbReference type="GO" id="GO:0052381">
    <property type="term" value="F:tRNA dimethylallyltransferase activity"/>
    <property type="evidence" value="ECO:0007669"/>
    <property type="project" value="UniProtKB-UniRule"/>
</dbReference>
<dbReference type="GO" id="GO:0006400">
    <property type="term" value="P:tRNA modification"/>
    <property type="evidence" value="ECO:0007669"/>
    <property type="project" value="TreeGrafter"/>
</dbReference>
<dbReference type="FunFam" id="1.10.20.140:FF:000001">
    <property type="entry name" value="tRNA dimethylallyltransferase"/>
    <property type="match status" value="1"/>
</dbReference>
<dbReference type="Gene3D" id="1.10.20.140">
    <property type="match status" value="1"/>
</dbReference>
<dbReference type="Gene3D" id="3.40.50.300">
    <property type="entry name" value="P-loop containing nucleotide triphosphate hydrolases"/>
    <property type="match status" value="1"/>
</dbReference>
<dbReference type="HAMAP" id="MF_00185">
    <property type="entry name" value="IPP_trans"/>
    <property type="match status" value="1"/>
</dbReference>
<dbReference type="InterPro" id="IPR039657">
    <property type="entry name" value="Dimethylallyltransferase"/>
</dbReference>
<dbReference type="InterPro" id="IPR018022">
    <property type="entry name" value="IPT"/>
</dbReference>
<dbReference type="InterPro" id="IPR027417">
    <property type="entry name" value="P-loop_NTPase"/>
</dbReference>
<dbReference type="NCBIfam" id="TIGR00174">
    <property type="entry name" value="miaA"/>
    <property type="match status" value="1"/>
</dbReference>
<dbReference type="PANTHER" id="PTHR11088">
    <property type="entry name" value="TRNA DIMETHYLALLYLTRANSFERASE"/>
    <property type="match status" value="1"/>
</dbReference>
<dbReference type="PANTHER" id="PTHR11088:SF60">
    <property type="entry name" value="TRNA DIMETHYLALLYLTRANSFERASE"/>
    <property type="match status" value="1"/>
</dbReference>
<dbReference type="Pfam" id="PF01715">
    <property type="entry name" value="IPPT"/>
    <property type="match status" value="1"/>
</dbReference>
<dbReference type="SUPFAM" id="SSF52540">
    <property type="entry name" value="P-loop containing nucleoside triphosphate hydrolases"/>
    <property type="match status" value="1"/>
</dbReference>
<organism>
    <name type="scientific">Bacillus cereus (strain B4264)</name>
    <dbReference type="NCBI Taxonomy" id="405532"/>
    <lineage>
        <taxon>Bacteria</taxon>
        <taxon>Bacillati</taxon>
        <taxon>Bacillota</taxon>
        <taxon>Bacilli</taxon>
        <taxon>Bacillales</taxon>
        <taxon>Bacillaceae</taxon>
        <taxon>Bacillus</taxon>
        <taxon>Bacillus cereus group</taxon>
    </lineage>
</organism>
<proteinExistence type="inferred from homology"/>
<name>MIAA_BACC4</name>
<feature type="chain" id="PRO_1000118518" description="tRNA dimethylallyltransferase">
    <location>
        <begin position="1"/>
        <end position="317"/>
    </location>
</feature>
<feature type="region of interest" description="Interaction with substrate tRNA" evidence="1">
    <location>
        <begin position="39"/>
        <end position="42"/>
    </location>
</feature>
<feature type="binding site" evidence="1">
    <location>
        <begin position="14"/>
        <end position="21"/>
    </location>
    <ligand>
        <name>ATP</name>
        <dbReference type="ChEBI" id="CHEBI:30616"/>
    </ligand>
</feature>
<feature type="binding site" evidence="1">
    <location>
        <begin position="16"/>
        <end position="21"/>
    </location>
    <ligand>
        <name>substrate</name>
    </ligand>
</feature>
<feature type="site" description="Interaction with substrate tRNA" evidence="1">
    <location>
        <position position="105"/>
    </location>
</feature>
<feature type="site" description="Interaction with substrate tRNA" evidence="1">
    <location>
        <position position="128"/>
    </location>
</feature>